<sequence>MVKDDKLVPSIRLLTPNELSEQWANPNSEINQITRAVLTIQGIDLKAIDLNQAAQIIYFCQANNLNPLNKEVYLIQMGNRLAPIVGIHTMTERAYRTERLVGIVQSYNDVNKSAKTILTIRSPGLKGLGTVEAEVFLSEYSTNKNLWLTKPITMLKKVSLAHALRLSGLLAFKGDTPYIYEEMQQGEAVPNKKMFTPPVAEVIEPAVENIKKVDFNEF</sequence>
<reference key="1">
    <citation type="journal article" date="2000" name="Nature">
        <title>The complete sequence of the mucosal pathogen Ureaplasma urealyticum.</title>
        <authorList>
            <person name="Glass J.I."/>
            <person name="Lefkowitz E.J."/>
            <person name="Glass J.S."/>
            <person name="Heiner C.R."/>
            <person name="Chen E.Y."/>
            <person name="Cassell G.H."/>
        </authorList>
    </citation>
    <scope>NUCLEOTIDE SEQUENCE [LARGE SCALE GENOMIC DNA]</scope>
    <source>
        <strain>ATCC 700970</strain>
    </source>
</reference>
<accession>Q9PQZ0</accession>
<keyword id="KW-1185">Reference proteome</keyword>
<name>Y154_UREPA</name>
<organism>
    <name type="scientific">Ureaplasma parvum serovar 3 (strain ATCC 700970)</name>
    <dbReference type="NCBI Taxonomy" id="273119"/>
    <lineage>
        <taxon>Bacteria</taxon>
        <taxon>Bacillati</taxon>
        <taxon>Mycoplasmatota</taxon>
        <taxon>Mycoplasmoidales</taxon>
        <taxon>Mycoplasmoidaceae</taxon>
        <taxon>Ureaplasma</taxon>
    </lineage>
</organism>
<proteinExistence type="predicted"/>
<protein>
    <recommendedName>
        <fullName>Uncharacterized protein UU154</fullName>
    </recommendedName>
</protein>
<feature type="chain" id="PRO_0000220813" description="Uncharacterized protein UU154">
    <location>
        <begin position="1"/>
        <end position="218"/>
    </location>
</feature>
<gene>
    <name type="ordered locus">UU154</name>
</gene>
<dbReference type="EMBL" id="AF222894">
    <property type="protein sequence ID" value="AAF30560.1"/>
    <property type="molecule type" value="Genomic_DNA"/>
</dbReference>
<dbReference type="RefSeq" id="WP_004025556.1">
    <property type="nucleotide sequence ID" value="NC_002162.1"/>
</dbReference>
<dbReference type="STRING" id="273119.UU154"/>
<dbReference type="EnsemblBacteria" id="AAF30560">
    <property type="protein sequence ID" value="AAF30560"/>
    <property type="gene ID" value="UU154"/>
</dbReference>
<dbReference type="GeneID" id="93848875"/>
<dbReference type="KEGG" id="uur:UU154"/>
<dbReference type="HOGENOM" id="CLU_1266438_0_0_14"/>
<dbReference type="OrthoDB" id="9816120at2"/>
<dbReference type="Proteomes" id="UP000000423">
    <property type="component" value="Chromosome"/>
</dbReference>
<dbReference type="GO" id="GO:0003677">
    <property type="term" value="F:DNA binding"/>
    <property type="evidence" value="ECO:0007669"/>
    <property type="project" value="InterPro"/>
</dbReference>
<dbReference type="GO" id="GO:0006310">
    <property type="term" value="P:DNA recombination"/>
    <property type="evidence" value="ECO:0007669"/>
    <property type="project" value="InterPro"/>
</dbReference>
<dbReference type="InterPro" id="IPR010183">
    <property type="entry name" value="Phage_lambda_Bet"/>
</dbReference>
<dbReference type="InterPro" id="IPR018330">
    <property type="entry name" value="RecT_fam"/>
</dbReference>
<dbReference type="NCBIfam" id="TIGR01913">
    <property type="entry name" value="bet_lambda"/>
    <property type="match status" value="1"/>
</dbReference>
<dbReference type="Pfam" id="PF03837">
    <property type="entry name" value="RecT"/>
    <property type="match status" value="1"/>
</dbReference>